<accession>B9MG15</accession>
<comment type="function">
    <text evidence="1">ATP-dependent specificity component of the Clp protease. It directs the protease to specific substrates. Can perform chaperone functions in the absence of ClpP.</text>
</comment>
<comment type="subunit">
    <text evidence="1">Component of the ClpX-ClpP complex. Forms a hexameric ring that, in the presence of ATP, binds to fourteen ClpP subunits assembled into a disk-like structure with a central cavity, resembling the structure of eukaryotic proteasomes.</text>
</comment>
<comment type="similarity">
    <text evidence="1">Belongs to the ClpX chaperone family.</text>
</comment>
<dbReference type="EMBL" id="CP001392">
    <property type="protein sequence ID" value="ACM32606.1"/>
    <property type="molecule type" value="Genomic_DNA"/>
</dbReference>
<dbReference type="RefSeq" id="WP_011804642.1">
    <property type="nucleotide sequence ID" value="NC_011992.1"/>
</dbReference>
<dbReference type="SMR" id="B9MG15"/>
<dbReference type="KEGG" id="dia:Dtpsy_1129"/>
<dbReference type="eggNOG" id="COG1219">
    <property type="taxonomic scope" value="Bacteria"/>
</dbReference>
<dbReference type="HOGENOM" id="CLU_014218_8_2_4"/>
<dbReference type="Proteomes" id="UP000000450">
    <property type="component" value="Chromosome"/>
</dbReference>
<dbReference type="GO" id="GO:0009376">
    <property type="term" value="C:HslUV protease complex"/>
    <property type="evidence" value="ECO:0007669"/>
    <property type="project" value="TreeGrafter"/>
</dbReference>
<dbReference type="GO" id="GO:0005524">
    <property type="term" value="F:ATP binding"/>
    <property type="evidence" value="ECO:0007669"/>
    <property type="project" value="UniProtKB-UniRule"/>
</dbReference>
<dbReference type="GO" id="GO:0016887">
    <property type="term" value="F:ATP hydrolysis activity"/>
    <property type="evidence" value="ECO:0007669"/>
    <property type="project" value="InterPro"/>
</dbReference>
<dbReference type="GO" id="GO:0140662">
    <property type="term" value="F:ATP-dependent protein folding chaperone"/>
    <property type="evidence" value="ECO:0007669"/>
    <property type="project" value="InterPro"/>
</dbReference>
<dbReference type="GO" id="GO:0046983">
    <property type="term" value="F:protein dimerization activity"/>
    <property type="evidence" value="ECO:0007669"/>
    <property type="project" value="InterPro"/>
</dbReference>
<dbReference type="GO" id="GO:0051082">
    <property type="term" value="F:unfolded protein binding"/>
    <property type="evidence" value="ECO:0007669"/>
    <property type="project" value="UniProtKB-UniRule"/>
</dbReference>
<dbReference type="GO" id="GO:0008270">
    <property type="term" value="F:zinc ion binding"/>
    <property type="evidence" value="ECO:0007669"/>
    <property type="project" value="InterPro"/>
</dbReference>
<dbReference type="GO" id="GO:0051301">
    <property type="term" value="P:cell division"/>
    <property type="evidence" value="ECO:0007669"/>
    <property type="project" value="TreeGrafter"/>
</dbReference>
<dbReference type="GO" id="GO:0051603">
    <property type="term" value="P:proteolysis involved in protein catabolic process"/>
    <property type="evidence" value="ECO:0007669"/>
    <property type="project" value="TreeGrafter"/>
</dbReference>
<dbReference type="CDD" id="cd19497">
    <property type="entry name" value="RecA-like_ClpX"/>
    <property type="match status" value="1"/>
</dbReference>
<dbReference type="FunFam" id="1.10.8.60:FF:000002">
    <property type="entry name" value="ATP-dependent Clp protease ATP-binding subunit ClpX"/>
    <property type="match status" value="1"/>
</dbReference>
<dbReference type="FunFam" id="3.40.50.300:FF:000005">
    <property type="entry name" value="ATP-dependent Clp protease ATP-binding subunit ClpX"/>
    <property type="match status" value="1"/>
</dbReference>
<dbReference type="Gene3D" id="1.10.8.60">
    <property type="match status" value="1"/>
</dbReference>
<dbReference type="Gene3D" id="6.20.220.10">
    <property type="entry name" value="ClpX chaperone, C4-type zinc finger domain"/>
    <property type="match status" value="1"/>
</dbReference>
<dbReference type="Gene3D" id="3.40.50.300">
    <property type="entry name" value="P-loop containing nucleotide triphosphate hydrolases"/>
    <property type="match status" value="1"/>
</dbReference>
<dbReference type="HAMAP" id="MF_00175">
    <property type="entry name" value="ClpX"/>
    <property type="match status" value="1"/>
</dbReference>
<dbReference type="InterPro" id="IPR003593">
    <property type="entry name" value="AAA+_ATPase"/>
</dbReference>
<dbReference type="InterPro" id="IPR050052">
    <property type="entry name" value="ATP-dep_Clp_protease_ClpX"/>
</dbReference>
<dbReference type="InterPro" id="IPR003959">
    <property type="entry name" value="ATPase_AAA_core"/>
</dbReference>
<dbReference type="InterPro" id="IPR019489">
    <property type="entry name" value="Clp_ATPase_C"/>
</dbReference>
<dbReference type="InterPro" id="IPR004487">
    <property type="entry name" value="Clp_protease_ATP-bd_su_ClpX"/>
</dbReference>
<dbReference type="InterPro" id="IPR046425">
    <property type="entry name" value="ClpX_bact"/>
</dbReference>
<dbReference type="InterPro" id="IPR027417">
    <property type="entry name" value="P-loop_NTPase"/>
</dbReference>
<dbReference type="InterPro" id="IPR010603">
    <property type="entry name" value="Znf_CppX_C4"/>
</dbReference>
<dbReference type="InterPro" id="IPR038366">
    <property type="entry name" value="Znf_CppX_C4_sf"/>
</dbReference>
<dbReference type="NCBIfam" id="TIGR00382">
    <property type="entry name" value="clpX"/>
    <property type="match status" value="1"/>
</dbReference>
<dbReference type="NCBIfam" id="NF003745">
    <property type="entry name" value="PRK05342.1"/>
    <property type="match status" value="1"/>
</dbReference>
<dbReference type="PANTHER" id="PTHR48102:SF7">
    <property type="entry name" value="ATP-DEPENDENT CLP PROTEASE ATP-BINDING SUBUNIT CLPX-LIKE, MITOCHONDRIAL"/>
    <property type="match status" value="1"/>
</dbReference>
<dbReference type="PANTHER" id="PTHR48102">
    <property type="entry name" value="ATP-DEPENDENT CLP PROTEASE ATP-BINDING SUBUNIT CLPX-LIKE, MITOCHONDRIAL-RELATED"/>
    <property type="match status" value="1"/>
</dbReference>
<dbReference type="Pfam" id="PF07724">
    <property type="entry name" value="AAA_2"/>
    <property type="match status" value="1"/>
</dbReference>
<dbReference type="Pfam" id="PF10431">
    <property type="entry name" value="ClpB_D2-small"/>
    <property type="match status" value="1"/>
</dbReference>
<dbReference type="Pfam" id="PF06689">
    <property type="entry name" value="zf-C4_ClpX"/>
    <property type="match status" value="1"/>
</dbReference>
<dbReference type="SMART" id="SM00382">
    <property type="entry name" value="AAA"/>
    <property type="match status" value="1"/>
</dbReference>
<dbReference type="SMART" id="SM01086">
    <property type="entry name" value="ClpB_D2-small"/>
    <property type="match status" value="1"/>
</dbReference>
<dbReference type="SMART" id="SM00994">
    <property type="entry name" value="zf-C4_ClpX"/>
    <property type="match status" value="1"/>
</dbReference>
<dbReference type="SUPFAM" id="SSF57716">
    <property type="entry name" value="Glucocorticoid receptor-like (DNA-binding domain)"/>
    <property type="match status" value="1"/>
</dbReference>
<dbReference type="SUPFAM" id="SSF52540">
    <property type="entry name" value="P-loop containing nucleoside triphosphate hydrolases"/>
    <property type="match status" value="1"/>
</dbReference>
<dbReference type="PROSITE" id="PS51902">
    <property type="entry name" value="CLPX_ZB"/>
    <property type="match status" value="1"/>
</dbReference>
<reference key="1">
    <citation type="submission" date="2009-01" db="EMBL/GenBank/DDBJ databases">
        <title>Complete sequence of Diaphorobacter sp. TPSY.</title>
        <authorList>
            <consortium name="US DOE Joint Genome Institute"/>
            <person name="Lucas S."/>
            <person name="Copeland A."/>
            <person name="Lapidus A."/>
            <person name="Glavina del Rio T."/>
            <person name="Tice H."/>
            <person name="Bruce D."/>
            <person name="Goodwin L."/>
            <person name="Pitluck S."/>
            <person name="Chertkov O."/>
            <person name="Brettin T."/>
            <person name="Detter J.C."/>
            <person name="Han C."/>
            <person name="Larimer F."/>
            <person name="Land M."/>
            <person name="Hauser L."/>
            <person name="Kyrpides N."/>
            <person name="Mikhailova N."/>
            <person name="Coates J.D."/>
        </authorList>
    </citation>
    <scope>NUCLEOTIDE SEQUENCE [LARGE SCALE GENOMIC DNA]</scope>
    <source>
        <strain>TPSY</strain>
    </source>
</reference>
<evidence type="ECO:0000255" key="1">
    <source>
        <dbReference type="HAMAP-Rule" id="MF_00175"/>
    </source>
</evidence>
<evidence type="ECO:0000255" key="2">
    <source>
        <dbReference type="PROSITE-ProRule" id="PRU01250"/>
    </source>
</evidence>
<organism>
    <name type="scientific">Acidovorax ebreus (strain TPSY)</name>
    <name type="common">Diaphorobacter sp. (strain TPSY)</name>
    <dbReference type="NCBI Taxonomy" id="535289"/>
    <lineage>
        <taxon>Bacteria</taxon>
        <taxon>Pseudomonadati</taxon>
        <taxon>Pseudomonadota</taxon>
        <taxon>Betaproteobacteria</taxon>
        <taxon>Burkholderiales</taxon>
        <taxon>Comamonadaceae</taxon>
        <taxon>Diaphorobacter</taxon>
    </lineage>
</organism>
<protein>
    <recommendedName>
        <fullName evidence="1">ATP-dependent Clp protease ATP-binding subunit ClpX</fullName>
    </recommendedName>
</protein>
<feature type="chain" id="PRO_1000123832" description="ATP-dependent Clp protease ATP-binding subunit ClpX">
    <location>
        <begin position="1"/>
        <end position="421"/>
    </location>
</feature>
<feature type="domain" description="ClpX-type ZB" evidence="2">
    <location>
        <begin position="3"/>
        <end position="56"/>
    </location>
</feature>
<feature type="binding site" evidence="2">
    <location>
        <position position="15"/>
    </location>
    <ligand>
        <name>Zn(2+)</name>
        <dbReference type="ChEBI" id="CHEBI:29105"/>
    </ligand>
</feature>
<feature type="binding site" evidence="2">
    <location>
        <position position="18"/>
    </location>
    <ligand>
        <name>Zn(2+)</name>
        <dbReference type="ChEBI" id="CHEBI:29105"/>
    </ligand>
</feature>
<feature type="binding site" evidence="2">
    <location>
        <position position="37"/>
    </location>
    <ligand>
        <name>Zn(2+)</name>
        <dbReference type="ChEBI" id="CHEBI:29105"/>
    </ligand>
</feature>
<feature type="binding site" evidence="2">
    <location>
        <position position="40"/>
    </location>
    <ligand>
        <name>Zn(2+)</name>
        <dbReference type="ChEBI" id="CHEBI:29105"/>
    </ligand>
</feature>
<feature type="binding site" evidence="1">
    <location>
        <begin position="123"/>
        <end position="130"/>
    </location>
    <ligand>
        <name>ATP</name>
        <dbReference type="ChEBI" id="CHEBI:30616"/>
    </ligand>
</feature>
<keyword id="KW-0067">ATP-binding</keyword>
<keyword id="KW-0143">Chaperone</keyword>
<keyword id="KW-0479">Metal-binding</keyword>
<keyword id="KW-0547">Nucleotide-binding</keyword>
<keyword id="KW-1185">Reference proteome</keyword>
<keyword id="KW-0862">Zinc</keyword>
<sequence>MAEKKGSSSEKTLYCSFCGKSQHEVKKLIAGPSVFICDECIDLCNEIIRDELPTGDAGREGRGDLPTPAEIKTNLDHYVIGQEKAKRTLAVAVYNHYKRLRHKDKAGKDEVELSKSNILLIGPTGSGKTLLAQTLARQLDVPFVMADATTLTEAGYVGEDVENIVQKLLQSCNYDVERAQRGIVYIDEIDKISRKSDNPSITRDVSGEGVQQALLKLIEGTMASVPPQGGRKHPNQDFLQIDTTNILFICGGAFAGLEKVIENRTEASGIGFGAAVRSKKQRSLTEVFQDIEPEDLIKFGLIPELVGRMPVVTALAELSEDALVQILTEPKNALVKQYSKLLAMEGVELEIRPAALKSIARKAIARKTGARGLRSILEQALIGTMFDLPNVSNVEKVVVDEATIEENKAPLLVYREAAKTA</sequence>
<name>CLPX_ACIET</name>
<gene>
    <name evidence="1" type="primary">clpX</name>
    <name type="ordered locus">Dtpsy_1129</name>
</gene>
<proteinExistence type="inferred from homology"/>